<dbReference type="EC" id="5.3.1.9" evidence="1"/>
<dbReference type="EMBL" id="BX897700">
    <property type="protein sequence ID" value="CAF25635.1"/>
    <property type="molecule type" value="Genomic_DNA"/>
</dbReference>
<dbReference type="SMR" id="Q6G0T9"/>
<dbReference type="KEGG" id="bqu:BQ01300"/>
<dbReference type="eggNOG" id="COG0166">
    <property type="taxonomic scope" value="Bacteria"/>
</dbReference>
<dbReference type="HOGENOM" id="CLU_017947_3_1_5"/>
<dbReference type="UniPathway" id="UPA00109">
    <property type="reaction ID" value="UER00181"/>
</dbReference>
<dbReference type="UniPathway" id="UPA00138"/>
<dbReference type="Proteomes" id="UP000000597">
    <property type="component" value="Chromosome"/>
</dbReference>
<dbReference type="GO" id="GO:0005829">
    <property type="term" value="C:cytosol"/>
    <property type="evidence" value="ECO:0007669"/>
    <property type="project" value="TreeGrafter"/>
</dbReference>
<dbReference type="GO" id="GO:0097367">
    <property type="term" value="F:carbohydrate derivative binding"/>
    <property type="evidence" value="ECO:0007669"/>
    <property type="project" value="InterPro"/>
</dbReference>
<dbReference type="GO" id="GO:0004347">
    <property type="term" value="F:glucose-6-phosphate isomerase activity"/>
    <property type="evidence" value="ECO:0007669"/>
    <property type="project" value="UniProtKB-UniRule"/>
</dbReference>
<dbReference type="GO" id="GO:0048029">
    <property type="term" value="F:monosaccharide binding"/>
    <property type="evidence" value="ECO:0007669"/>
    <property type="project" value="TreeGrafter"/>
</dbReference>
<dbReference type="GO" id="GO:0006094">
    <property type="term" value="P:gluconeogenesis"/>
    <property type="evidence" value="ECO:0007669"/>
    <property type="project" value="UniProtKB-UniRule"/>
</dbReference>
<dbReference type="GO" id="GO:0051156">
    <property type="term" value="P:glucose 6-phosphate metabolic process"/>
    <property type="evidence" value="ECO:0007669"/>
    <property type="project" value="TreeGrafter"/>
</dbReference>
<dbReference type="GO" id="GO:0006096">
    <property type="term" value="P:glycolytic process"/>
    <property type="evidence" value="ECO:0007669"/>
    <property type="project" value="UniProtKB-UniRule"/>
</dbReference>
<dbReference type="CDD" id="cd05015">
    <property type="entry name" value="SIS_PGI_1"/>
    <property type="match status" value="1"/>
</dbReference>
<dbReference type="CDD" id="cd05016">
    <property type="entry name" value="SIS_PGI_2"/>
    <property type="match status" value="1"/>
</dbReference>
<dbReference type="Gene3D" id="1.10.1390.10">
    <property type="match status" value="1"/>
</dbReference>
<dbReference type="Gene3D" id="3.40.50.10490">
    <property type="entry name" value="Glucose-6-phosphate isomerase like protein, domain 1"/>
    <property type="match status" value="2"/>
</dbReference>
<dbReference type="HAMAP" id="MF_00473">
    <property type="entry name" value="G6P_isomerase"/>
    <property type="match status" value="1"/>
</dbReference>
<dbReference type="InterPro" id="IPR001672">
    <property type="entry name" value="G6P_Isomerase"/>
</dbReference>
<dbReference type="InterPro" id="IPR023096">
    <property type="entry name" value="G6P_Isomerase_C"/>
</dbReference>
<dbReference type="InterPro" id="IPR018189">
    <property type="entry name" value="Phosphoglucose_isomerase_CS"/>
</dbReference>
<dbReference type="InterPro" id="IPR046348">
    <property type="entry name" value="SIS_dom_sf"/>
</dbReference>
<dbReference type="InterPro" id="IPR035476">
    <property type="entry name" value="SIS_PGI_1"/>
</dbReference>
<dbReference type="InterPro" id="IPR035482">
    <property type="entry name" value="SIS_PGI_2"/>
</dbReference>
<dbReference type="NCBIfam" id="NF001211">
    <property type="entry name" value="PRK00179.1"/>
    <property type="match status" value="1"/>
</dbReference>
<dbReference type="PANTHER" id="PTHR11469">
    <property type="entry name" value="GLUCOSE-6-PHOSPHATE ISOMERASE"/>
    <property type="match status" value="1"/>
</dbReference>
<dbReference type="PANTHER" id="PTHR11469:SF1">
    <property type="entry name" value="GLUCOSE-6-PHOSPHATE ISOMERASE"/>
    <property type="match status" value="1"/>
</dbReference>
<dbReference type="Pfam" id="PF00342">
    <property type="entry name" value="PGI"/>
    <property type="match status" value="1"/>
</dbReference>
<dbReference type="PRINTS" id="PR00662">
    <property type="entry name" value="G6PISOMERASE"/>
</dbReference>
<dbReference type="SUPFAM" id="SSF53697">
    <property type="entry name" value="SIS domain"/>
    <property type="match status" value="1"/>
</dbReference>
<dbReference type="PROSITE" id="PS00765">
    <property type="entry name" value="P_GLUCOSE_ISOMERASE_1"/>
    <property type="match status" value="1"/>
</dbReference>
<dbReference type="PROSITE" id="PS00174">
    <property type="entry name" value="P_GLUCOSE_ISOMERASE_2"/>
    <property type="match status" value="1"/>
</dbReference>
<dbReference type="PROSITE" id="PS51463">
    <property type="entry name" value="P_GLUCOSE_ISOMERASE_3"/>
    <property type="match status" value="1"/>
</dbReference>
<comment type="function">
    <text evidence="1">Catalyzes the reversible isomerization of glucose-6-phosphate to fructose-6-phosphate.</text>
</comment>
<comment type="catalytic activity">
    <reaction evidence="1">
        <text>alpha-D-glucose 6-phosphate = beta-D-fructose 6-phosphate</text>
        <dbReference type="Rhea" id="RHEA:11816"/>
        <dbReference type="ChEBI" id="CHEBI:57634"/>
        <dbReference type="ChEBI" id="CHEBI:58225"/>
        <dbReference type="EC" id="5.3.1.9"/>
    </reaction>
</comment>
<comment type="pathway">
    <text evidence="1">Carbohydrate biosynthesis; gluconeogenesis.</text>
</comment>
<comment type="pathway">
    <text evidence="1">Carbohydrate degradation; glycolysis; D-glyceraldehyde 3-phosphate and glycerone phosphate from D-glucose: step 2/4.</text>
</comment>
<comment type="subcellular location">
    <subcellularLocation>
        <location evidence="1">Cytoplasm</location>
    </subcellularLocation>
</comment>
<comment type="similarity">
    <text evidence="1">Belongs to the GPI family.</text>
</comment>
<accession>Q6G0T9</accession>
<gene>
    <name evidence="1" type="primary">pgi</name>
    <name type="ordered locus">BQ01300</name>
</gene>
<keyword id="KW-0963">Cytoplasm</keyword>
<keyword id="KW-0312">Gluconeogenesis</keyword>
<keyword id="KW-0324">Glycolysis</keyword>
<keyword id="KW-0413">Isomerase</keyword>
<reference key="1">
    <citation type="journal article" date="2004" name="Proc. Natl. Acad. Sci. U.S.A.">
        <title>The louse-borne human pathogen Bartonella quintana is a genomic derivative of the zoonotic agent Bartonella henselae.</title>
        <authorList>
            <person name="Alsmark U.C.M."/>
            <person name="Frank A.C."/>
            <person name="Karlberg E.O."/>
            <person name="Legault B.-A."/>
            <person name="Ardell D.H."/>
            <person name="Canbaeck B."/>
            <person name="Eriksson A.-S."/>
            <person name="Naeslund A.K."/>
            <person name="Handley S.A."/>
            <person name="Huvet M."/>
            <person name="La Scola B."/>
            <person name="Holmberg M."/>
            <person name="Andersson S.G.E."/>
        </authorList>
    </citation>
    <scope>NUCLEOTIDE SEQUENCE [LARGE SCALE GENOMIC DNA]</scope>
    <source>
        <strain>Toulouse</strain>
    </source>
</reference>
<evidence type="ECO:0000255" key="1">
    <source>
        <dbReference type="HAMAP-Rule" id="MF_00473"/>
    </source>
</evidence>
<organism>
    <name type="scientific">Bartonella quintana (strain Toulouse)</name>
    <name type="common">Rochalimaea quintana</name>
    <dbReference type="NCBI Taxonomy" id="283165"/>
    <lineage>
        <taxon>Bacteria</taxon>
        <taxon>Pseudomonadati</taxon>
        <taxon>Pseudomonadota</taxon>
        <taxon>Alphaproteobacteria</taxon>
        <taxon>Hyphomicrobiales</taxon>
        <taxon>Bartonellaceae</taxon>
        <taxon>Bartonella</taxon>
    </lineage>
</organism>
<protein>
    <recommendedName>
        <fullName evidence="1">Glucose-6-phosphate isomerase</fullName>
        <shortName evidence="1">GPI</shortName>
        <ecNumber evidence="1">5.3.1.9</ecNumber>
    </recommendedName>
    <alternativeName>
        <fullName evidence="1">Phosphoglucose isomerase</fullName>
        <shortName evidence="1">PGI</shortName>
    </alternativeName>
    <alternativeName>
        <fullName evidence="1">Phosphohexose isomerase</fullName>
        <shortName evidence="1">PHI</shortName>
    </alternativeName>
</protein>
<sequence>MRYKFMGDSLSIRNEKAFEAALQALRRHATKDGVYDIRRHFVEDEQRFSHFSLRLDDLLFDFSKCGITFKTLQLLDDLAVAADVLGRREAMFSGKAINTTEKRSVLHIALRMPTDEVFMLDGHDLVRDIQDVLAHMERFSEMVRDGSYKGNTGEKIINIVNIGIGGSDLGPAMVTHALKPYHDGPHCHFVSNADTAHISDTLSVLNPATTLFIIASKTFTTAETIANAQVARQWIISHLGEEAVCRHFVAVSSALDKVAEFGIDSSRIFKFWDWVGGRYSIWSAIGLVVMLAIGGQNFRQFLNGAQQMDRHFKIAPLHKNIPIRFALLGFWHRVVCGYASRAIIPYAQRLARFPAYLQQLDMESNGKQVSLDGKTLNFSSGPVVWGDSGTNGQHAFFQLLHQGTDVIPVEFILFIKGHEQNLHPMYDILVANCLAQSKALMKGRSVEDVRRILVKSGIDVHETEKLALHKSFEGNRPSIMLVQDLLTPFTLGRLIALYEHRIFVEGILMNINSFDQWGVEFGKELANELLPILRGENKANNRDSSTLGLLAYIQARREE</sequence>
<name>G6PI_BARQU</name>
<feature type="chain" id="PRO_0000180599" description="Glucose-6-phosphate isomerase">
    <location>
        <begin position="1"/>
        <end position="559"/>
    </location>
</feature>
<feature type="active site" description="Proton donor" evidence="1">
    <location>
        <position position="363"/>
    </location>
</feature>
<feature type="active site" evidence="1">
    <location>
        <position position="394"/>
    </location>
</feature>
<feature type="active site" evidence="1">
    <location>
        <position position="523"/>
    </location>
</feature>
<proteinExistence type="inferred from homology"/>